<name>TRHO_SALTY</name>
<proteinExistence type="inferred from homology"/>
<evidence type="ECO:0000255" key="1">
    <source>
        <dbReference type="HAMAP-Rule" id="MF_00469"/>
    </source>
</evidence>
<evidence type="ECO:0000256" key="2">
    <source>
        <dbReference type="SAM" id="MobiDB-lite"/>
    </source>
</evidence>
<dbReference type="EC" id="1.14.-.-" evidence="1"/>
<dbReference type="EMBL" id="AE006468">
    <property type="protein sequence ID" value="AAL20086.1"/>
    <property type="molecule type" value="Genomic_DNA"/>
</dbReference>
<dbReference type="RefSeq" id="NP_460127.1">
    <property type="nucleotide sequence ID" value="NC_003197.2"/>
</dbReference>
<dbReference type="RefSeq" id="WP_001144632.1">
    <property type="nucleotide sequence ID" value="NC_003197.2"/>
</dbReference>
<dbReference type="SMR" id="Q8ZQ23"/>
<dbReference type="STRING" id="99287.STM1156"/>
<dbReference type="PaxDb" id="99287-STM1156"/>
<dbReference type="GeneID" id="1252674"/>
<dbReference type="KEGG" id="stm:STM1156"/>
<dbReference type="PATRIC" id="fig|99287.12.peg.1223"/>
<dbReference type="HOGENOM" id="CLU_038878_1_1_6"/>
<dbReference type="OMA" id="CDTHTNC"/>
<dbReference type="PhylomeDB" id="Q8ZQ23"/>
<dbReference type="BioCyc" id="SENT99287:STM1156-MONOMER"/>
<dbReference type="Proteomes" id="UP000001014">
    <property type="component" value="Chromosome"/>
</dbReference>
<dbReference type="GO" id="GO:0016705">
    <property type="term" value="F:oxidoreductase activity, acting on paired donors, with incorporation or reduction of molecular oxygen"/>
    <property type="evidence" value="ECO:0007669"/>
    <property type="project" value="UniProtKB-UniRule"/>
</dbReference>
<dbReference type="GO" id="GO:0006400">
    <property type="term" value="P:tRNA modification"/>
    <property type="evidence" value="ECO:0007669"/>
    <property type="project" value="UniProtKB-UniRule"/>
</dbReference>
<dbReference type="CDD" id="cd01518">
    <property type="entry name" value="RHOD_YceA"/>
    <property type="match status" value="1"/>
</dbReference>
<dbReference type="Gene3D" id="3.30.70.100">
    <property type="match status" value="1"/>
</dbReference>
<dbReference type="Gene3D" id="3.40.250.10">
    <property type="entry name" value="Rhodanese-like domain"/>
    <property type="match status" value="1"/>
</dbReference>
<dbReference type="HAMAP" id="MF_00469">
    <property type="entry name" value="TrhO"/>
    <property type="match status" value="1"/>
</dbReference>
<dbReference type="InterPro" id="IPR001763">
    <property type="entry name" value="Rhodanese-like_dom"/>
</dbReference>
<dbReference type="InterPro" id="IPR036873">
    <property type="entry name" value="Rhodanese-like_dom_sf"/>
</dbReference>
<dbReference type="InterPro" id="IPR022111">
    <property type="entry name" value="Rhodanese_C"/>
</dbReference>
<dbReference type="InterPro" id="IPR020936">
    <property type="entry name" value="TrhO"/>
</dbReference>
<dbReference type="InterPro" id="IPR040503">
    <property type="entry name" value="TRHO_N"/>
</dbReference>
<dbReference type="NCBIfam" id="NF001133">
    <property type="entry name" value="PRK00142.1-1"/>
    <property type="match status" value="1"/>
</dbReference>
<dbReference type="PANTHER" id="PTHR43846:SF1">
    <property type="entry name" value="TRNA URIDINE(34) HYDROXYLASE"/>
    <property type="match status" value="1"/>
</dbReference>
<dbReference type="PANTHER" id="PTHR43846">
    <property type="entry name" value="UPF0176 PROTEIN YCEA"/>
    <property type="match status" value="1"/>
</dbReference>
<dbReference type="Pfam" id="PF00581">
    <property type="entry name" value="Rhodanese"/>
    <property type="match status" value="1"/>
</dbReference>
<dbReference type="Pfam" id="PF12368">
    <property type="entry name" value="Rhodanese_C"/>
    <property type="match status" value="1"/>
</dbReference>
<dbReference type="Pfam" id="PF17773">
    <property type="entry name" value="UPF0176_N"/>
    <property type="match status" value="1"/>
</dbReference>
<dbReference type="SMART" id="SM00450">
    <property type="entry name" value="RHOD"/>
    <property type="match status" value="1"/>
</dbReference>
<dbReference type="SUPFAM" id="SSF52821">
    <property type="entry name" value="Rhodanese/Cell cycle control phosphatase"/>
    <property type="match status" value="1"/>
</dbReference>
<dbReference type="PROSITE" id="PS50206">
    <property type="entry name" value="RHODANESE_3"/>
    <property type="match status" value="1"/>
</dbReference>
<gene>
    <name evidence="1" type="primary">trhO</name>
    <name type="synonym">yceA</name>
    <name type="ordered locus">STM1156</name>
</gene>
<accession>Q8ZQ23</accession>
<keyword id="KW-0560">Oxidoreductase</keyword>
<keyword id="KW-1185">Reference proteome</keyword>
<keyword id="KW-0819">tRNA processing</keyword>
<sequence length="350" mass="39853">MPVLHNRISNDELKAKMLAESEPRTTISFYKYFTIASPQQTRDALYQVFTALDVFGRVYLAHEGINAQISVPQSKLETFRQQLYTFDPALDGVRLNIALEDDGKSFWVLRMKVRDRIVADGIDDPTFDASNVGDYLKAADVNAMLDDPDAVFIDMRNHYEYEVGHFENALEIPADTFREQLPKAVEMLREHADKKIVMYCTGGIRCEKASAWMKHNGFNKVWHIEGGIIEYARRARAQGLPVRFIGKNFVFDERMGERISDEVIAHCHQCGASCDSHTNCKNDGCHLLFIQCPQCASKFNGCCSEQCCEELALPEEEQRRRRAGRENGNKIFNKSRGRLNSKLSIPDPAE</sequence>
<reference key="1">
    <citation type="journal article" date="2001" name="Nature">
        <title>Complete genome sequence of Salmonella enterica serovar Typhimurium LT2.</title>
        <authorList>
            <person name="McClelland M."/>
            <person name="Sanderson K.E."/>
            <person name="Spieth J."/>
            <person name="Clifton S.W."/>
            <person name="Latreille P."/>
            <person name="Courtney L."/>
            <person name="Porwollik S."/>
            <person name="Ali J."/>
            <person name="Dante M."/>
            <person name="Du F."/>
            <person name="Hou S."/>
            <person name="Layman D."/>
            <person name="Leonard S."/>
            <person name="Nguyen C."/>
            <person name="Scott K."/>
            <person name="Holmes A."/>
            <person name="Grewal N."/>
            <person name="Mulvaney E."/>
            <person name="Ryan E."/>
            <person name="Sun H."/>
            <person name="Florea L."/>
            <person name="Miller W."/>
            <person name="Stoneking T."/>
            <person name="Nhan M."/>
            <person name="Waterston R."/>
            <person name="Wilson R.K."/>
        </authorList>
    </citation>
    <scope>NUCLEOTIDE SEQUENCE [LARGE SCALE GENOMIC DNA]</scope>
    <source>
        <strain>LT2 / SGSC1412 / ATCC 700720</strain>
    </source>
</reference>
<feature type="chain" id="PRO_0000161510" description="tRNA uridine(34) hydroxylase">
    <location>
        <begin position="1"/>
        <end position="350"/>
    </location>
</feature>
<feature type="domain" description="Rhodanese" evidence="1">
    <location>
        <begin position="146"/>
        <end position="240"/>
    </location>
</feature>
<feature type="region of interest" description="Disordered" evidence="2">
    <location>
        <begin position="319"/>
        <end position="350"/>
    </location>
</feature>
<feature type="compositionally biased region" description="Basic and acidic residues" evidence="2">
    <location>
        <begin position="319"/>
        <end position="328"/>
    </location>
</feature>
<feature type="active site" description="Cysteine persulfide intermediate" evidence="1">
    <location>
        <position position="200"/>
    </location>
</feature>
<organism>
    <name type="scientific">Salmonella typhimurium (strain LT2 / SGSC1412 / ATCC 700720)</name>
    <dbReference type="NCBI Taxonomy" id="99287"/>
    <lineage>
        <taxon>Bacteria</taxon>
        <taxon>Pseudomonadati</taxon>
        <taxon>Pseudomonadota</taxon>
        <taxon>Gammaproteobacteria</taxon>
        <taxon>Enterobacterales</taxon>
        <taxon>Enterobacteriaceae</taxon>
        <taxon>Salmonella</taxon>
    </lineage>
</organism>
<protein>
    <recommendedName>
        <fullName evidence="1">tRNA uridine(34) hydroxylase</fullName>
        <ecNumber evidence="1">1.14.-.-</ecNumber>
    </recommendedName>
    <alternativeName>
        <fullName evidence="1">tRNA hydroxylation protein O</fullName>
    </alternativeName>
</protein>
<comment type="function">
    <text evidence="1">Catalyzes oxygen-dependent 5-hydroxyuridine (ho5U) modification at position 34 in tRNAs.</text>
</comment>
<comment type="catalytic activity">
    <reaction evidence="1">
        <text>uridine(34) in tRNA + AH2 + O2 = 5-hydroxyuridine(34) in tRNA + A + H2O</text>
        <dbReference type="Rhea" id="RHEA:64224"/>
        <dbReference type="Rhea" id="RHEA-COMP:11727"/>
        <dbReference type="Rhea" id="RHEA-COMP:13381"/>
        <dbReference type="ChEBI" id="CHEBI:13193"/>
        <dbReference type="ChEBI" id="CHEBI:15377"/>
        <dbReference type="ChEBI" id="CHEBI:15379"/>
        <dbReference type="ChEBI" id="CHEBI:17499"/>
        <dbReference type="ChEBI" id="CHEBI:65315"/>
        <dbReference type="ChEBI" id="CHEBI:136877"/>
    </reaction>
</comment>
<comment type="similarity">
    <text evidence="1">Belongs to the TrhO family.</text>
</comment>